<protein>
    <recommendedName>
        <fullName>SLIT and NTRK-like protein 2</fullName>
    </recommendedName>
</protein>
<organism evidence="8">
    <name type="scientific">Mus musculus</name>
    <name type="common">Mouse</name>
    <dbReference type="NCBI Taxonomy" id="10090"/>
    <lineage>
        <taxon>Eukaryota</taxon>
        <taxon>Metazoa</taxon>
        <taxon>Chordata</taxon>
        <taxon>Craniata</taxon>
        <taxon>Vertebrata</taxon>
        <taxon>Euteleostomi</taxon>
        <taxon>Mammalia</taxon>
        <taxon>Eutheria</taxon>
        <taxon>Euarchontoglires</taxon>
        <taxon>Glires</taxon>
        <taxon>Rodentia</taxon>
        <taxon>Myomorpha</taxon>
        <taxon>Muroidea</taxon>
        <taxon>Muridae</taxon>
        <taxon>Murinae</taxon>
        <taxon>Mus</taxon>
        <taxon>Mus</taxon>
    </lineage>
</organism>
<name>SLIK2_MOUSE</name>
<dbReference type="EMBL" id="AB097571">
    <property type="protein sequence ID" value="BAC67205.1"/>
    <property type="molecule type" value="Genomic_DNA"/>
</dbReference>
<dbReference type="EMBL" id="AK044761">
    <property type="protein sequence ID" value="BAC32071.2"/>
    <property type="molecule type" value="mRNA"/>
</dbReference>
<dbReference type="CCDS" id="CCDS30169.1"/>
<dbReference type="RefSeq" id="NP_001154903.1">
    <property type="nucleotide sequence ID" value="NM_001161431.1"/>
</dbReference>
<dbReference type="RefSeq" id="NP_942563.2">
    <property type="nucleotide sequence ID" value="NM_198863.2"/>
</dbReference>
<dbReference type="RefSeq" id="XP_006528077.1">
    <property type="nucleotide sequence ID" value="XM_006528014.3"/>
</dbReference>
<dbReference type="RefSeq" id="XP_006528079.1">
    <property type="nucleotide sequence ID" value="XM_006528016.3"/>
</dbReference>
<dbReference type="RefSeq" id="XP_030107197.1">
    <property type="nucleotide sequence ID" value="XM_030251337.2"/>
</dbReference>
<dbReference type="RefSeq" id="XP_036017846.1">
    <property type="nucleotide sequence ID" value="XM_036161953.1"/>
</dbReference>
<dbReference type="PDB" id="4Y61">
    <property type="method" value="X-ray"/>
    <property type="resolution" value="3.36 A"/>
    <property type="chains" value="B=1-266"/>
</dbReference>
<dbReference type="PDBsum" id="4Y61"/>
<dbReference type="SMR" id="Q810C0"/>
<dbReference type="BioGRID" id="232772">
    <property type="interactions" value="2"/>
</dbReference>
<dbReference type="FunCoup" id="Q810C0">
    <property type="interactions" value="269"/>
</dbReference>
<dbReference type="STRING" id="10090.ENSMUSP00000130057"/>
<dbReference type="GlyCosmos" id="Q810C0">
    <property type="glycosylation" value="3 sites, No reported glycans"/>
</dbReference>
<dbReference type="GlyGen" id="Q810C0">
    <property type="glycosylation" value="5 sites, 2 N-linked glycans (2 sites), 1 O-linked glycan (1 site)"/>
</dbReference>
<dbReference type="iPTMnet" id="Q810C0"/>
<dbReference type="PhosphoSitePlus" id="Q810C0"/>
<dbReference type="PaxDb" id="10090-ENSMUSP00000130057"/>
<dbReference type="ProteomicsDB" id="261080"/>
<dbReference type="Antibodypedia" id="30574">
    <property type="antibodies" value="149 antibodies from 27 providers"/>
</dbReference>
<dbReference type="DNASU" id="245450"/>
<dbReference type="Ensembl" id="ENSMUST00000036043.5">
    <property type="protein sequence ID" value="ENSMUSP00000044094.5"/>
    <property type="gene ID" value="ENSMUSG00000036790.6"/>
</dbReference>
<dbReference type="Ensembl" id="ENSMUST00000166241.2">
    <property type="protein sequence ID" value="ENSMUSP00000130057.2"/>
    <property type="gene ID" value="ENSMUSG00000036790.6"/>
</dbReference>
<dbReference type="GeneID" id="245450"/>
<dbReference type="KEGG" id="mmu:245450"/>
<dbReference type="UCSC" id="uc009tir.2">
    <property type="organism name" value="mouse"/>
</dbReference>
<dbReference type="AGR" id="MGI:2679449"/>
<dbReference type="CTD" id="84631"/>
<dbReference type="MGI" id="MGI:2679449">
    <property type="gene designation" value="Slitrk2"/>
</dbReference>
<dbReference type="VEuPathDB" id="HostDB:ENSMUSG00000036790"/>
<dbReference type="eggNOG" id="ENOG502QR6C">
    <property type="taxonomic scope" value="Eukaryota"/>
</dbReference>
<dbReference type="GeneTree" id="ENSGT00940000161248"/>
<dbReference type="HOGENOM" id="CLU_012706_1_0_1"/>
<dbReference type="InParanoid" id="Q810C0"/>
<dbReference type="OMA" id="DICKTRC"/>
<dbReference type="OrthoDB" id="9439679at2759"/>
<dbReference type="PhylomeDB" id="Q810C0"/>
<dbReference type="TreeFam" id="TF351826"/>
<dbReference type="Reactome" id="R-MMU-388844">
    <property type="pathway name" value="Receptor-type tyrosine-protein phosphatases"/>
</dbReference>
<dbReference type="BioGRID-ORCS" id="245450">
    <property type="hits" value="0 hits in 76 CRISPR screens"/>
</dbReference>
<dbReference type="ChiTaRS" id="Slitrk2">
    <property type="organism name" value="mouse"/>
</dbReference>
<dbReference type="EvolutionaryTrace" id="Q810C0"/>
<dbReference type="PRO" id="PR:Q810C0"/>
<dbReference type="Proteomes" id="UP000000589">
    <property type="component" value="Chromosome X"/>
</dbReference>
<dbReference type="RNAct" id="Q810C0">
    <property type="molecule type" value="protein"/>
</dbReference>
<dbReference type="Bgee" id="ENSMUSG00000036790">
    <property type="expression patterns" value="Expressed in trigeminal ganglion and 120 other cell types or tissues"/>
</dbReference>
<dbReference type="ExpressionAtlas" id="Q810C0">
    <property type="expression patterns" value="baseline and differential"/>
</dbReference>
<dbReference type="GO" id="GO:0030425">
    <property type="term" value="C:dendrite"/>
    <property type="evidence" value="ECO:0000250"/>
    <property type="project" value="UniProtKB"/>
</dbReference>
<dbReference type="GO" id="GO:0098982">
    <property type="term" value="C:GABA-ergic synapse"/>
    <property type="evidence" value="ECO:0007669"/>
    <property type="project" value="Ensembl"/>
</dbReference>
<dbReference type="GO" id="GO:0098978">
    <property type="term" value="C:glutamatergic synapse"/>
    <property type="evidence" value="ECO:0007669"/>
    <property type="project" value="Ensembl"/>
</dbReference>
<dbReference type="GO" id="GO:0016020">
    <property type="term" value="C:membrane"/>
    <property type="evidence" value="ECO:0000250"/>
    <property type="project" value="MGI"/>
</dbReference>
<dbReference type="GO" id="GO:0005886">
    <property type="term" value="C:plasma membrane"/>
    <property type="evidence" value="ECO:0000250"/>
    <property type="project" value="UniProtKB"/>
</dbReference>
<dbReference type="GO" id="GO:0045211">
    <property type="term" value="C:postsynaptic membrane"/>
    <property type="evidence" value="ECO:0007669"/>
    <property type="project" value="Ensembl"/>
</dbReference>
<dbReference type="GO" id="GO:0007409">
    <property type="term" value="P:axonogenesis"/>
    <property type="evidence" value="ECO:0000314"/>
    <property type="project" value="MGI"/>
</dbReference>
<dbReference type="GO" id="GO:0051965">
    <property type="term" value="P:positive regulation of synapse assembly"/>
    <property type="evidence" value="ECO:0000314"/>
    <property type="project" value="UniProtKB"/>
</dbReference>
<dbReference type="GO" id="GO:1905606">
    <property type="term" value="P:regulation of presynapse assembly"/>
    <property type="evidence" value="ECO:0007669"/>
    <property type="project" value="Ensembl"/>
</dbReference>
<dbReference type="GO" id="GO:0099560">
    <property type="term" value="P:synaptic membrane adhesion"/>
    <property type="evidence" value="ECO:0007669"/>
    <property type="project" value="Ensembl"/>
</dbReference>
<dbReference type="FunFam" id="3.80.10.10:FF:000001">
    <property type="entry name" value="SLIT and NTRK-like family, member 1"/>
    <property type="match status" value="2"/>
</dbReference>
<dbReference type="Gene3D" id="3.80.10.10">
    <property type="entry name" value="Ribonuclease Inhibitor"/>
    <property type="match status" value="2"/>
</dbReference>
<dbReference type="InterPro" id="IPR000483">
    <property type="entry name" value="Cys-rich_flank_reg_C"/>
</dbReference>
<dbReference type="InterPro" id="IPR001611">
    <property type="entry name" value="Leu-rich_rpt"/>
</dbReference>
<dbReference type="InterPro" id="IPR003591">
    <property type="entry name" value="Leu-rich_rpt_typical-subtyp"/>
</dbReference>
<dbReference type="InterPro" id="IPR032675">
    <property type="entry name" value="LRR_dom_sf"/>
</dbReference>
<dbReference type="InterPro" id="IPR000372">
    <property type="entry name" value="LRRNT"/>
</dbReference>
<dbReference type="PANTHER" id="PTHR45773:SF4">
    <property type="entry name" value="SLIT AND NTRK-LIKE PROTEIN 2"/>
    <property type="match status" value="1"/>
</dbReference>
<dbReference type="PANTHER" id="PTHR45773">
    <property type="entry name" value="SLIT AND NTRK-LIKE PROTEIN 4-RELATED"/>
    <property type="match status" value="1"/>
</dbReference>
<dbReference type="Pfam" id="PF13855">
    <property type="entry name" value="LRR_8"/>
    <property type="match status" value="2"/>
</dbReference>
<dbReference type="SMART" id="SM00369">
    <property type="entry name" value="LRR_TYP"/>
    <property type="match status" value="10"/>
</dbReference>
<dbReference type="SMART" id="SM00082">
    <property type="entry name" value="LRRCT"/>
    <property type="match status" value="2"/>
</dbReference>
<dbReference type="SMART" id="SM00013">
    <property type="entry name" value="LRRNT"/>
    <property type="match status" value="2"/>
</dbReference>
<dbReference type="SUPFAM" id="SSF52058">
    <property type="entry name" value="L domain-like"/>
    <property type="match status" value="2"/>
</dbReference>
<dbReference type="PROSITE" id="PS51450">
    <property type="entry name" value="LRR"/>
    <property type="match status" value="12"/>
</dbReference>
<accession>Q810C0</accession>
<accession>Q8BXL6</accession>
<feature type="signal peptide" evidence="2">
    <location>
        <begin position="1"/>
        <end position="21"/>
    </location>
</feature>
<feature type="chain" id="PRO_0000032676" description="SLIT and NTRK-like protein 2" evidence="2">
    <location>
        <begin position="22"/>
        <end position="846"/>
    </location>
</feature>
<feature type="topological domain" description="Extracellular" evidence="2">
    <location>
        <begin position="22"/>
        <end position="622"/>
    </location>
</feature>
<feature type="transmembrane region" description="Helical" evidence="2">
    <location>
        <begin position="623"/>
        <end position="643"/>
    </location>
</feature>
<feature type="topological domain" description="Cytoplasmic" evidence="2">
    <location>
        <begin position="644"/>
        <end position="846"/>
    </location>
</feature>
<feature type="repeat" description="LRR 1">
    <location>
        <begin position="63"/>
        <end position="84"/>
    </location>
</feature>
<feature type="repeat" description="LRR 2">
    <location>
        <begin position="87"/>
        <end position="108"/>
    </location>
</feature>
<feature type="repeat" description="LRR 3">
    <location>
        <begin position="111"/>
        <end position="132"/>
    </location>
</feature>
<feature type="repeat" description="LRR 4">
    <location>
        <begin position="135"/>
        <end position="156"/>
    </location>
</feature>
<feature type="repeat" description="LRR 5">
    <location>
        <begin position="159"/>
        <end position="180"/>
    </location>
</feature>
<feature type="repeat" description="LRR 6">
    <location>
        <begin position="182"/>
        <end position="203"/>
    </location>
</feature>
<feature type="domain" description="LRRCT 1">
    <location>
        <begin position="216"/>
        <end position="265"/>
    </location>
</feature>
<feature type="domain" description="LRRNT">
    <location>
        <begin position="332"/>
        <end position="374"/>
    </location>
</feature>
<feature type="repeat" description="LRR 7">
    <location>
        <begin position="377"/>
        <end position="398"/>
    </location>
</feature>
<feature type="repeat" description="LRR 8">
    <location>
        <begin position="401"/>
        <end position="422"/>
    </location>
</feature>
<feature type="repeat" description="LRR 9">
    <location>
        <begin position="425"/>
        <end position="446"/>
    </location>
</feature>
<feature type="repeat" description="LRR 10">
    <location>
        <begin position="449"/>
        <end position="470"/>
    </location>
</feature>
<feature type="repeat" description="LRR 11">
    <location>
        <begin position="473"/>
        <end position="494"/>
    </location>
</feature>
<feature type="repeat" description="LRR 12">
    <location>
        <begin position="496"/>
        <end position="517"/>
    </location>
</feature>
<feature type="domain" description="LRRCT 2">
    <location>
        <begin position="530"/>
        <end position="581"/>
    </location>
</feature>
<feature type="region of interest" description="Required for interaction with PTPRD" evidence="5">
    <location>
        <begin position="167"/>
        <end position="215"/>
    </location>
</feature>
<feature type="region of interest" description="Disordered" evidence="3">
    <location>
        <begin position="261"/>
        <end position="322"/>
    </location>
</feature>
<feature type="compositionally biased region" description="Low complexity" evidence="3">
    <location>
        <begin position="267"/>
        <end position="276"/>
    </location>
</feature>
<feature type="compositionally biased region" description="Low complexity" evidence="3">
    <location>
        <begin position="285"/>
        <end position="300"/>
    </location>
</feature>
<feature type="modified residue" description="Phosphotyrosine" evidence="10">
    <location>
        <position position="757"/>
    </location>
</feature>
<feature type="glycosylation site" description="N-linked (GlcNAc...) asparagine" evidence="2 5 9">
    <location>
        <position position="84"/>
    </location>
</feature>
<feature type="glycosylation site" description="N-linked (GlcNAc...) asparagine" evidence="5 9">
    <location>
        <position position="219"/>
    </location>
</feature>
<feature type="glycosylation site" description="N-linked (GlcNAc...) asparagine" evidence="2">
    <location>
        <position position="422"/>
    </location>
</feature>
<feature type="disulfide bond" evidence="5 9">
    <location>
        <begin position="29"/>
        <end position="35"/>
    </location>
</feature>
<feature type="disulfide bond" evidence="5 9">
    <location>
        <begin position="33"/>
        <end position="46"/>
    </location>
</feature>
<feature type="disulfide bond" evidence="5 9">
    <location>
        <begin position="220"/>
        <end position="243"/>
    </location>
</feature>
<feature type="disulfide bond" evidence="5 9">
    <location>
        <begin position="222"/>
        <end position="263"/>
    </location>
</feature>
<feature type="mutagenesis site" description="No effect on interaction with PTPRD. No effect on synapse assembly." evidence="5">
    <original>R</original>
    <variation>A</variation>
    <location>
        <position position="114"/>
    </location>
</feature>
<feature type="mutagenesis site" description="Abolishes interaction with PTPRD. Abolishes synapse assembly." evidence="5">
    <original>D</original>
    <variation>A</variation>
    <location>
        <position position="167"/>
    </location>
</feature>
<feature type="mutagenesis site" description="Abolishes interaction with PTPRD. Abolishes synapse assembly." evidence="5">
    <original>D</original>
    <variation>A</variation>
    <location>
        <position position="187"/>
    </location>
</feature>
<feature type="mutagenesis site" description="Abolishes interaction with PTPRD. Significantly reduces synapse assembly." evidence="5">
    <original>E</original>
    <variation>A</variation>
    <location>
        <position position="215"/>
    </location>
</feature>
<feature type="mutagenesis site" description="No effect on interaction with PTPRD. No effect on synapse assembly." evidence="5">
    <original>FRLH</original>
    <variation>ARLA</variation>
    <location>
        <begin position="247"/>
        <end position="250"/>
    </location>
</feature>
<feature type="sequence conflict" description="In Ref. 2; BAC32071." evidence="7" ref="2">
    <original>D</original>
    <variation>H</variation>
    <location>
        <position position="526"/>
    </location>
</feature>
<feature type="strand" evidence="11">
    <location>
        <begin position="31"/>
        <end position="37"/>
    </location>
</feature>
<feature type="strand" evidence="11">
    <location>
        <begin position="39"/>
        <end position="45"/>
    </location>
</feature>
<feature type="strand" evidence="11">
    <location>
        <begin position="54"/>
        <end position="56"/>
    </location>
</feature>
<feature type="strand" evidence="11">
    <location>
        <begin position="61"/>
        <end position="63"/>
    </location>
</feature>
<feature type="strand" evidence="11">
    <location>
        <begin position="65"/>
        <end position="68"/>
    </location>
</feature>
<feature type="strand" evidence="11">
    <location>
        <begin position="75"/>
        <end position="77"/>
    </location>
</feature>
<feature type="strand" evidence="11">
    <location>
        <begin position="88"/>
        <end position="92"/>
    </location>
</feature>
<feature type="strand" evidence="11">
    <location>
        <begin position="114"/>
        <end position="116"/>
    </location>
</feature>
<feature type="turn" evidence="11">
    <location>
        <begin position="127"/>
        <end position="130"/>
    </location>
</feature>
<feature type="strand" evidence="11">
    <location>
        <begin position="138"/>
        <end position="140"/>
    </location>
</feature>
<feature type="helix" evidence="11">
    <location>
        <begin position="151"/>
        <end position="154"/>
    </location>
</feature>
<feature type="strand" evidence="11">
    <location>
        <begin position="162"/>
        <end position="164"/>
    </location>
</feature>
<feature type="strand" evidence="11">
    <location>
        <begin position="177"/>
        <end position="180"/>
    </location>
</feature>
<feature type="strand" evidence="11">
    <location>
        <begin position="184"/>
        <end position="187"/>
    </location>
</feature>
<feature type="turn" evidence="11">
    <location>
        <begin position="198"/>
        <end position="200"/>
    </location>
</feature>
<feature type="helix" evidence="11">
    <location>
        <begin position="201"/>
        <end position="204"/>
    </location>
</feature>
<feature type="strand" evidence="11">
    <location>
        <begin position="209"/>
        <end position="212"/>
    </location>
</feature>
<feature type="helix" evidence="11">
    <location>
        <begin position="222"/>
        <end position="224"/>
    </location>
</feature>
<feature type="helix" evidence="11">
    <location>
        <begin position="225"/>
        <end position="233"/>
    </location>
</feature>
<feature type="strand" evidence="11">
    <location>
        <begin position="242"/>
        <end position="245"/>
    </location>
</feature>
<feature type="helix" evidence="11">
    <location>
        <begin position="247"/>
        <end position="249"/>
    </location>
</feature>
<feature type="turn" evidence="11">
    <location>
        <begin position="254"/>
        <end position="256"/>
    </location>
</feature>
<feature type="helix" evidence="11">
    <location>
        <begin position="259"/>
        <end position="262"/>
    </location>
</feature>
<evidence type="ECO:0000250" key="1">
    <source>
        <dbReference type="UniProtKB" id="Q9H156"/>
    </source>
</evidence>
<evidence type="ECO:0000255" key="2"/>
<evidence type="ECO:0000256" key="3">
    <source>
        <dbReference type="SAM" id="MobiDB-lite"/>
    </source>
</evidence>
<evidence type="ECO:0000269" key="4">
    <source>
    </source>
</evidence>
<evidence type="ECO:0000269" key="5">
    <source>
    </source>
</evidence>
<evidence type="ECO:0000269" key="6">
    <source>
    </source>
</evidence>
<evidence type="ECO:0000305" key="7"/>
<evidence type="ECO:0000312" key="8">
    <source>
        <dbReference type="EMBL" id="BAC67205.1"/>
    </source>
</evidence>
<evidence type="ECO:0007744" key="9">
    <source>
        <dbReference type="PDB" id="4Y61"/>
    </source>
</evidence>
<evidence type="ECO:0007744" key="10">
    <source>
    </source>
</evidence>
<evidence type="ECO:0007829" key="11">
    <source>
        <dbReference type="PDB" id="4Y61"/>
    </source>
</evidence>
<keyword id="KW-0002">3D-structure</keyword>
<keyword id="KW-1003">Cell membrane</keyword>
<keyword id="KW-0966">Cell projection</keyword>
<keyword id="KW-1015">Disulfide bond</keyword>
<keyword id="KW-0325">Glycoprotein</keyword>
<keyword id="KW-0433">Leucine-rich repeat</keyword>
<keyword id="KW-0472">Membrane</keyword>
<keyword id="KW-0597">Phosphoprotein</keyword>
<keyword id="KW-1185">Reference proteome</keyword>
<keyword id="KW-0677">Repeat</keyword>
<keyword id="KW-0732">Signal</keyword>
<keyword id="KW-0812">Transmembrane</keyword>
<keyword id="KW-1133">Transmembrane helix</keyword>
<proteinExistence type="evidence at protein level"/>
<comment type="function">
    <text evidence="1 4 5 6">It is involved in synaptogenesis (PubMed:25989451, PubMed:35840571). Promotes excitatory synapse differentiation (By similarity). Suppresses neurite outgrowth (PubMed:14550773). Involved in the negative regulation of NTRK2 (PubMed:35840571).</text>
</comment>
<comment type="subunit">
    <text evidence="1 5">Interacts with PTPRD; this interaction is PTPRD splicing-dependent and may induce pre-synaptic differentiation. Interacts with NTRK2 (By similarity).</text>
</comment>
<comment type="subcellular location">
    <subcellularLocation>
        <location evidence="7">Membrane</location>
        <topology evidence="7">Single-pass type I membrane protein</topology>
    </subcellularLocation>
    <subcellularLocation>
        <location evidence="1">Cell membrane</location>
    </subcellularLocation>
    <subcellularLocation>
        <location evidence="1">Cell projection</location>
        <location evidence="1">Dendrite</location>
    </subcellularLocation>
</comment>
<comment type="tissue specificity">
    <text evidence="4">In the adult, significant expression is detected only in the brain. Broadly expressed in embryonic brain with highest expression in ventricular layer, subventricular zone, cortical plate, pyramidal layer of hippocampus, subicular neuroepithelium, thalamus, hypothalamus and spinal cord.</text>
</comment>
<comment type="developmental stage">
    <text evidence="4">In the embryo, expressed from day 9-12 and continues through later gestational development and into adulthood.</text>
</comment>
<comment type="disruption phenotype">
    <text evidence="6">Conditional knockout of the gene causes impaired long-term memory and abnormal gait. Excitatory neuronal development is abnormal in the mutant animals as evidenced by a reduction of excitatory synaptic puncta in the hippocampus. Hippocampal CA1 pyramidal cell-targeted knockout of the gene results in impaired synapse maintenance and abnormal retention of spatial reference memory.</text>
</comment>
<comment type="similarity">
    <text evidence="7">Belongs to the SLITRK family.</text>
</comment>
<gene>
    <name type="primary">Slitrk2</name>
</gene>
<sequence length="846" mass="95436">MLSGVWFLSVLTVAGILQTESRKTAKDICKIRCLCEEKENVLNINCENKGFTTVSLLQPPQYRIYQLFLNGNLLTRLYPNEFVNYSNAVTLHLGNNGLQEIRPGAFSGLKTLKRLHLNNNKLEVLREDTFLGLESLEYLQADYNYISTIEAGAFSKLNKLKVLILNDNLLLSLPSNVFRFVLLTHLDLRGNRLKVMPFAGVLEHIGGIMEIQLEENPWNCTCDLLPLKAWLDTITVFVGEIVCETPFRLHGKDVTQLTRQDLCPRKSASGDSSQRSSHSDTHVQRLTPTTNPALNPTRAPKASRPPKMRNRPTPRVTVSKDRQSFGPIMVYQTKSPVALTCPSSCVCTSQSSDNGLNVNCQERKFTNISDLQPKPTSPKKLYLTGNYLQTVYKNDLLEYSSLDLLHLGNNRIAVIQEGAFTNLTSLRRLYLNGNYLEVLYPSMFDGLQSLQYLYLEYNVIKEIKPLTFDALINLQLLFLNNNLLRSLPDNIFGGTALTRLNLRNNHFSHLPVKGVLDQLPAFIQIDLQENPWDCTCDIMGLKDWTEHANSPVIINEVTCESPAKHAGEILKFLGREAICPENPNLSDGTILSMNHNTDTPRSLSVSPSSYPELHTEVPLSVLILGLLVVFILSVCFGAGLFVFVLKRRKGVPNVPRNATNLDVSSFQLQYGSYNTETNDKADGHVYNYIPPPVGQMCQNPIYMQKEGDPVAYYRNLQDFSYGNLEEKKEEPATLAYTISATELLEKQATPREPELLYQNIAERVKELPSAGLVHYNFCTLPKRQFAPSYESRRQNQDRINKTVLYGTPRKCFVGQSKPDHPLLQAKPQSEPDYLEVLEKQTAISQL</sequence>
<reference evidence="7" key="1">
    <citation type="journal article" date="2003" name="Mol. Cell. Neurosci.">
        <title>Identification and characterization of Slitrk, a novel neuronal transmembrane protein family controlling neurite outgrowth.</title>
        <authorList>
            <person name="Aruga J."/>
            <person name="Mikoshiba K."/>
        </authorList>
    </citation>
    <scope>NUCLEOTIDE SEQUENCE [GENOMIC DNA]</scope>
    <scope>FUNCTION</scope>
    <scope>TISSUE SPECIFICITY</scope>
    <scope>DEVELOPMENTAL STAGE</scope>
</reference>
<reference key="2">
    <citation type="journal article" date="2005" name="Science">
        <title>The transcriptional landscape of the mammalian genome.</title>
        <authorList>
            <person name="Carninci P."/>
            <person name="Kasukawa T."/>
            <person name="Katayama S."/>
            <person name="Gough J."/>
            <person name="Frith M.C."/>
            <person name="Maeda N."/>
            <person name="Oyama R."/>
            <person name="Ravasi T."/>
            <person name="Lenhard B."/>
            <person name="Wells C."/>
            <person name="Kodzius R."/>
            <person name="Shimokawa K."/>
            <person name="Bajic V.B."/>
            <person name="Brenner S.E."/>
            <person name="Batalov S."/>
            <person name="Forrest A.R."/>
            <person name="Zavolan M."/>
            <person name="Davis M.J."/>
            <person name="Wilming L.G."/>
            <person name="Aidinis V."/>
            <person name="Allen J.E."/>
            <person name="Ambesi-Impiombato A."/>
            <person name="Apweiler R."/>
            <person name="Aturaliya R.N."/>
            <person name="Bailey T.L."/>
            <person name="Bansal M."/>
            <person name="Baxter L."/>
            <person name="Beisel K.W."/>
            <person name="Bersano T."/>
            <person name="Bono H."/>
            <person name="Chalk A.M."/>
            <person name="Chiu K.P."/>
            <person name="Choudhary V."/>
            <person name="Christoffels A."/>
            <person name="Clutterbuck D.R."/>
            <person name="Crowe M.L."/>
            <person name="Dalla E."/>
            <person name="Dalrymple B.P."/>
            <person name="de Bono B."/>
            <person name="Della Gatta G."/>
            <person name="di Bernardo D."/>
            <person name="Down T."/>
            <person name="Engstrom P."/>
            <person name="Fagiolini M."/>
            <person name="Faulkner G."/>
            <person name="Fletcher C.F."/>
            <person name="Fukushima T."/>
            <person name="Furuno M."/>
            <person name="Futaki S."/>
            <person name="Gariboldi M."/>
            <person name="Georgii-Hemming P."/>
            <person name="Gingeras T.R."/>
            <person name="Gojobori T."/>
            <person name="Green R.E."/>
            <person name="Gustincich S."/>
            <person name="Harbers M."/>
            <person name="Hayashi Y."/>
            <person name="Hensch T.K."/>
            <person name="Hirokawa N."/>
            <person name="Hill D."/>
            <person name="Huminiecki L."/>
            <person name="Iacono M."/>
            <person name="Ikeo K."/>
            <person name="Iwama A."/>
            <person name="Ishikawa T."/>
            <person name="Jakt M."/>
            <person name="Kanapin A."/>
            <person name="Katoh M."/>
            <person name="Kawasawa Y."/>
            <person name="Kelso J."/>
            <person name="Kitamura H."/>
            <person name="Kitano H."/>
            <person name="Kollias G."/>
            <person name="Krishnan S.P."/>
            <person name="Kruger A."/>
            <person name="Kummerfeld S.K."/>
            <person name="Kurochkin I.V."/>
            <person name="Lareau L.F."/>
            <person name="Lazarevic D."/>
            <person name="Lipovich L."/>
            <person name="Liu J."/>
            <person name="Liuni S."/>
            <person name="McWilliam S."/>
            <person name="Madan Babu M."/>
            <person name="Madera M."/>
            <person name="Marchionni L."/>
            <person name="Matsuda H."/>
            <person name="Matsuzawa S."/>
            <person name="Miki H."/>
            <person name="Mignone F."/>
            <person name="Miyake S."/>
            <person name="Morris K."/>
            <person name="Mottagui-Tabar S."/>
            <person name="Mulder N."/>
            <person name="Nakano N."/>
            <person name="Nakauchi H."/>
            <person name="Ng P."/>
            <person name="Nilsson R."/>
            <person name="Nishiguchi S."/>
            <person name="Nishikawa S."/>
            <person name="Nori F."/>
            <person name="Ohara O."/>
            <person name="Okazaki Y."/>
            <person name="Orlando V."/>
            <person name="Pang K.C."/>
            <person name="Pavan W.J."/>
            <person name="Pavesi G."/>
            <person name="Pesole G."/>
            <person name="Petrovsky N."/>
            <person name="Piazza S."/>
            <person name="Reed J."/>
            <person name="Reid J.F."/>
            <person name="Ring B.Z."/>
            <person name="Ringwald M."/>
            <person name="Rost B."/>
            <person name="Ruan Y."/>
            <person name="Salzberg S.L."/>
            <person name="Sandelin A."/>
            <person name="Schneider C."/>
            <person name="Schoenbach C."/>
            <person name="Sekiguchi K."/>
            <person name="Semple C.A."/>
            <person name="Seno S."/>
            <person name="Sessa L."/>
            <person name="Sheng Y."/>
            <person name="Shibata Y."/>
            <person name="Shimada H."/>
            <person name="Shimada K."/>
            <person name="Silva D."/>
            <person name="Sinclair B."/>
            <person name="Sperling S."/>
            <person name="Stupka E."/>
            <person name="Sugiura K."/>
            <person name="Sultana R."/>
            <person name="Takenaka Y."/>
            <person name="Taki K."/>
            <person name="Tammoja K."/>
            <person name="Tan S.L."/>
            <person name="Tang S."/>
            <person name="Taylor M.S."/>
            <person name="Tegner J."/>
            <person name="Teichmann S.A."/>
            <person name="Ueda H.R."/>
            <person name="van Nimwegen E."/>
            <person name="Verardo R."/>
            <person name="Wei C.L."/>
            <person name="Yagi K."/>
            <person name="Yamanishi H."/>
            <person name="Zabarovsky E."/>
            <person name="Zhu S."/>
            <person name="Zimmer A."/>
            <person name="Hide W."/>
            <person name="Bult C."/>
            <person name="Grimmond S.M."/>
            <person name="Teasdale R.D."/>
            <person name="Liu E.T."/>
            <person name="Brusic V."/>
            <person name="Quackenbush J."/>
            <person name="Wahlestedt C."/>
            <person name="Mattick J.S."/>
            <person name="Hume D.A."/>
            <person name="Kai C."/>
            <person name="Sasaki D."/>
            <person name="Tomaru Y."/>
            <person name="Fukuda S."/>
            <person name="Kanamori-Katayama M."/>
            <person name="Suzuki M."/>
            <person name="Aoki J."/>
            <person name="Arakawa T."/>
            <person name="Iida J."/>
            <person name="Imamura K."/>
            <person name="Itoh M."/>
            <person name="Kato T."/>
            <person name="Kawaji H."/>
            <person name="Kawagashira N."/>
            <person name="Kawashima T."/>
            <person name="Kojima M."/>
            <person name="Kondo S."/>
            <person name="Konno H."/>
            <person name="Nakano K."/>
            <person name="Ninomiya N."/>
            <person name="Nishio T."/>
            <person name="Okada M."/>
            <person name="Plessy C."/>
            <person name="Shibata K."/>
            <person name="Shiraki T."/>
            <person name="Suzuki S."/>
            <person name="Tagami M."/>
            <person name="Waki K."/>
            <person name="Watahiki A."/>
            <person name="Okamura-Oho Y."/>
            <person name="Suzuki H."/>
            <person name="Kawai J."/>
            <person name="Hayashizaki Y."/>
        </authorList>
    </citation>
    <scope>NUCLEOTIDE SEQUENCE [LARGE SCALE MRNA] OF 1-724</scope>
    <source>
        <strain>C57BL/6J</strain>
        <tissue>Retina</tissue>
    </source>
</reference>
<reference key="3">
    <citation type="journal article" date="2008" name="J. Proteome Res.">
        <title>Large-scale identification and evolution indexing of tyrosine phosphorylation sites from murine brain.</title>
        <authorList>
            <person name="Ballif B.A."/>
            <person name="Carey G.R."/>
            <person name="Sunyaev S.R."/>
            <person name="Gygi S.P."/>
        </authorList>
    </citation>
    <scope>PHOSPHORYLATION [LARGE SCALE ANALYSIS] AT TYR-757</scope>
    <scope>IDENTIFICATION BY MASS SPECTROMETRY [LARGE SCALE ANALYSIS]</scope>
    <source>
        <tissue>Brain</tissue>
    </source>
</reference>
<reference key="4">
    <citation type="journal article" date="2022" name="Nat. Commun.">
        <title>SLITRK2 variants associated with neurodevelopmental disorders impair excitatory synaptic function and cognition in mice.</title>
        <authorList>
            <person name="El Chehadeh S."/>
            <person name="Han K.A."/>
            <person name="Kim D."/>
            <person name="Jang G."/>
            <person name="Bakhtiari S."/>
            <person name="Lim D."/>
            <person name="Kim H.Y."/>
            <person name="Kim J."/>
            <person name="Kim H."/>
            <person name="Wynn J."/>
            <person name="Chung W.K."/>
            <person name="Vitiello G."/>
            <person name="Cutcutache I."/>
            <person name="Page M."/>
            <person name="Gecz J."/>
            <person name="Harper K."/>
            <person name="Han A.R."/>
            <person name="Kim H.M."/>
            <person name="Wessels M."/>
            <person name="Bayat A."/>
            <person name="Jaen A.F."/>
            <person name="Selicorni A."/>
            <person name="Maitz S."/>
            <person name="de Brouwer A.P.M."/>
            <person name="Silfhout A.V."/>
            <person name="Armstrong M."/>
            <person name="Symonds J."/>
            <person name="Kuery S."/>
            <person name="Isidor B."/>
            <person name="Cogne B."/>
            <person name="Nizon M."/>
            <person name="Feger C."/>
            <person name="Muller J."/>
            <person name="Torti E."/>
            <person name="Grange D.K."/>
            <person name="Willems M."/>
            <person name="Kruer M.C."/>
            <person name="Ko J."/>
            <person name="Piton A."/>
            <person name="Um J.W."/>
        </authorList>
    </citation>
    <scope>DISRUPTION PHENOTYPE</scope>
    <scope>FUNCTION</scope>
</reference>
<reference evidence="9" key="5">
    <citation type="journal article" date="2015" name="Sci. Rep.">
        <title>Structure of Slitrk2-PTPdelta complex reveals mechanisms for splicing-dependent trans-synaptic adhesion.</title>
        <authorList>
            <person name="Yamagata A."/>
            <person name="Sato Y."/>
            <person name="Goto-Ito S."/>
            <person name="Uemura T."/>
            <person name="Maeda A."/>
            <person name="Shiroshima T."/>
            <person name="Yoshida T."/>
            <person name="Fukai S."/>
        </authorList>
    </citation>
    <scope>X-RAY CRYSTALLOGRAPHY (3.36 ANGSTROMS) OF 1-266 IN COMPLEX WITH PTPRD</scope>
    <scope>INTERACTION WITH PTPRD</scope>
    <scope>MUTAGENESIS OF ARG-114; ASP-167; ASP-187; GLU-215 AND 247-PHE--HIS-250</scope>
    <scope>FUNCTION</scope>
    <scope>REGION</scope>
    <scope>DISULFIDE BONDS</scope>
    <scope>GLYCOSYLATION AT ASN-84 AND ASN-219</scope>
</reference>